<sequence length="285" mass="30676">MGQLGVGRTGKTAVLDIELRRSGSRTIISRQYSEVPLQVQRALYPDAGLPGMAHVYVLSPSGGLLQGDRYKTSISLKDKAAAHVTTQGASRIYGMNSNCAIHKMDISAGKGCYLEYIPDQVIPYAKSRYFQEVRLAIDDDAAAVYSEVVTPGRVAMGESFLYDILCTSVRCENQDGSLRFAENARAEPRRMNLRGEAVLGGYSVHGTVYVMAPPESARTIEYTAGRIISHTDGILGGTSLLPGGAGITARLLSHRTDSIFKCIEGIAGACRMEMTGAAYPGIRKC</sequence>
<feature type="chain" id="PRO_0000340535" description="Urease accessory protein UreD">
    <location>
        <begin position="1"/>
        <end position="285"/>
    </location>
</feature>
<reference key="1">
    <citation type="journal article" date="2006" name="Proc. Natl. Acad. Sci. U.S.A.">
        <title>Genomic analysis of the uncultivated marine crenarchaeote Cenarchaeum symbiosum.</title>
        <authorList>
            <person name="Hallam S.J."/>
            <person name="Konstantinidis K.T."/>
            <person name="Putnam N."/>
            <person name="Schleper C."/>
            <person name="Watanabe Y."/>
            <person name="Sugahara J."/>
            <person name="Preston C."/>
            <person name="de la Torre J."/>
            <person name="Richardson P.M."/>
            <person name="DeLong E.F."/>
        </authorList>
    </citation>
    <scope>NUCLEOTIDE SEQUENCE [LARGE SCALE GENOMIC DNA]</scope>
    <source>
        <strain>A</strain>
    </source>
</reference>
<name>URED_CENSY</name>
<comment type="function">
    <text evidence="1">Required for maturation of urease via the functional incorporation of the urease nickel metallocenter.</text>
</comment>
<comment type="subunit">
    <text evidence="1">UreD, UreF and UreG form a complex that acts as a GTP-hydrolysis-dependent molecular chaperone, activating the urease apoprotein by helping to assemble the nickel containing metallocenter of UreC. The UreE protein probably delivers the nickel.</text>
</comment>
<comment type="subcellular location">
    <subcellularLocation>
        <location evidence="1">Cytoplasm</location>
    </subcellularLocation>
</comment>
<comment type="similarity">
    <text evidence="1">Belongs to the UreD family.</text>
</comment>
<organism>
    <name type="scientific">Cenarchaeum symbiosum (strain A)</name>
    <dbReference type="NCBI Taxonomy" id="414004"/>
    <lineage>
        <taxon>Archaea</taxon>
        <taxon>Nitrososphaerota</taxon>
        <taxon>Candidatus Cenarchaeales</taxon>
        <taxon>Candidatus Cenarchaeaceae</taxon>
        <taxon>Candidatus Cenarchaeum</taxon>
    </lineage>
</organism>
<proteinExistence type="inferred from homology"/>
<protein>
    <recommendedName>
        <fullName evidence="1">Urease accessory protein UreD</fullName>
    </recommendedName>
</protein>
<dbReference type="EMBL" id="DP000238">
    <property type="protein sequence ID" value="ABK77084.1"/>
    <property type="molecule type" value="Genomic_DNA"/>
</dbReference>
<dbReference type="SMR" id="A0RUR7"/>
<dbReference type="STRING" id="414004.CENSYa_0450"/>
<dbReference type="EnsemblBacteria" id="ABK77084">
    <property type="protein sequence ID" value="ABK77084"/>
    <property type="gene ID" value="CENSYa_0450"/>
</dbReference>
<dbReference type="KEGG" id="csy:CENSYa_0450"/>
<dbReference type="PATRIC" id="fig|414004.10.peg.409"/>
<dbReference type="HOGENOM" id="CLU_056339_1_0_2"/>
<dbReference type="Proteomes" id="UP000000758">
    <property type="component" value="Chromosome"/>
</dbReference>
<dbReference type="GO" id="GO:0005737">
    <property type="term" value="C:cytoplasm"/>
    <property type="evidence" value="ECO:0007669"/>
    <property type="project" value="UniProtKB-SubCell"/>
</dbReference>
<dbReference type="GO" id="GO:0016151">
    <property type="term" value="F:nickel cation binding"/>
    <property type="evidence" value="ECO:0007669"/>
    <property type="project" value="UniProtKB-UniRule"/>
</dbReference>
<dbReference type="HAMAP" id="MF_01384">
    <property type="entry name" value="UreD"/>
    <property type="match status" value="1"/>
</dbReference>
<dbReference type="InterPro" id="IPR002669">
    <property type="entry name" value="UreD"/>
</dbReference>
<dbReference type="PANTHER" id="PTHR33643">
    <property type="entry name" value="UREASE ACCESSORY PROTEIN D"/>
    <property type="match status" value="1"/>
</dbReference>
<dbReference type="PANTHER" id="PTHR33643:SF1">
    <property type="entry name" value="UREASE ACCESSORY PROTEIN D"/>
    <property type="match status" value="1"/>
</dbReference>
<dbReference type="Pfam" id="PF01774">
    <property type="entry name" value="UreD"/>
    <property type="match status" value="1"/>
</dbReference>
<keyword id="KW-0143">Chaperone</keyword>
<keyword id="KW-0963">Cytoplasm</keyword>
<keyword id="KW-0996">Nickel insertion</keyword>
<keyword id="KW-1185">Reference proteome</keyword>
<accession>A0RUR7</accession>
<evidence type="ECO:0000255" key="1">
    <source>
        <dbReference type="HAMAP-Rule" id="MF_01384"/>
    </source>
</evidence>
<gene>
    <name evidence="1" type="primary">ureD</name>
    <name type="ordered locus">CENSYa_0450</name>
</gene>